<reference key="1">
    <citation type="journal article" date="1995" name="Plant Mol. Biol. Rep.">
        <title>Complete nucleotide sequence of the Porphyra purpurea chloroplast genome.</title>
        <authorList>
            <person name="Reith M.E."/>
            <person name="Munholland J."/>
        </authorList>
    </citation>
    <scope>NUCLEOTIDE SEQUENCE [LARGE SCALE GENOMIC DNA]</scope>
    <source>
        <strain>Avonport</strain>
    </source>
</reference>
<keyword id="KW-0150">Chloroplast</keyword>
<keyword id="KW-0472">Membrane</keyword>
<keyword id="KW-0602">Photosynthesis</keyword>
<keyword id="KW-0604">Photosystem II</keyword>
<keyword id="KW-0934">Plastid</keyword>
<keyword id="KW-0793">Thylakoid</keyword>
<keyword id="KW-0812">Transmembrane</keyword>
<keyword id="KW-1133">Transmembrane helix</keyword>
<proteinExistence type="inferred from homology"/>
<comment type="function">
    <text evidence="1">One of the components of the core complex of photosystem II (PSII), required for its stability and/or assembly. PSII is a light-driven water:plastoquinone oxidoreductase that uses light energy to abstract electrons from H(2)O, generating O(2) and a proton gradient subsequently used for ATP formation. It consists of a core antenna complex that captures photons, and an electron transfer chain that converts photonic excitation into a charge separation.</text>
</comment>
<comment type="subunit">
    <text evidence="1">PSII is composed of 1 copy each of membrane proteins PsbA, PsbB, PsbC, PsbD, PsbE, PsbF, PsbH, PsbI, PsbJ, PsbK, PsbL, PsbM, PsbT, PsbX, PsbY, PsbZ, Psb30/Ycf12, at least 3 peripheral proteins of the oxygen-evolving complex and a large number of cofactors. It forms dimeric complexes.</text>
</comment>
<comment type="subcellular location">
    <subcellularLocation>
        <location evidence="1">Plastid</location>
        <location evidence="1">Chloroplast thylakoid membrane</location>
        <topology evidence="1">Single-pass membrane protein</topology>
    </subcellularLocation>
</comment>
<comment type="similarity">
    <text evidence="1">Belongs to the PsbH family.</text>
</comment>
<protein>
    <recommendedName>
        <fullName evidence="1">Photosystem II reaction center protein H</fullName>
        <shortName evidence="1">PSII-H</shortName>
    </recommendedName>
</protein>
<evidence type="ECO:0000255" key="1">
    <source>
        <dbReference type="HAMAP-Rule" id="MF_00752"/>
    </source>
</evidence>
<dbReference type="EMBL" id="U38804">
    <property type="protein sequence ID" value="AAC08211.1"/>
    <property type="molecule type" value="Genomic_DNA"/>
</dbReference>
<dbReference type="PIR" id="S73246">
    <property type="entry name" value="S73246"/>
</dbReference>
<dbReference type="RefSeq" id="NP_053935.1">
    <property type="nucleotide sequence ID" value="NC_000925.1"/>
</dbReference>
<dbReference type="SMR" id="P51325"/>
<dbReference type="GeneID" id="809954"/>
<dbReference type="GO" id="GO:0009535">
    <property type="term" value="C:chloroplast thylakoid membrane"/>
    <property type="evidence" value="ECO:0007669"/>
    <property type="project" value="UniProtKB-SubCell"/>
</dbReference>
<dbReference type="GO" id="GO:0009523">
    <property type="term" value="C:photosystem II"/>
    <property type="evidence" value="ECO:0007669"/>
    <property type="project" value="UniProtKB-KW"/>
</dbReference>
<dbReference type="GO" id="GO:0042301">
    <property type="term" value="F:phosphate ion binding"/>
    <property type="evidence" value="ECO:0007669"/>
    <property type="project" value="InterPro"/>
</dbReference>
<dbReference type="GO" id="GO:0015979">
    <property type="term" value="P:photosynthesis"/>
    <property type="evidence" value="ECO:0007669"/>
    <property type="project" value="UniProtKB-UniRule"/>
</dbReference>
<dbReference type="GO" id="GO:0050821">
    <property type="term" value="P:protein stabilization"/>
    <property type="evidence" value="ECO:0007669"/>
    <property type="project" value="InterPro"/>
</dbReference>
<dbReference type="Gene3D" id="1.20.5.880">
    <property type="entry name" value="Photosystem II reaction center protein H"/>
    <property type="match status" value="1"/>
</dbReference>
<dbReference type="HAMAP" id="MF_00752">
    <property type="entry name" value="PSII_PsbH"/>
    <property type="match status" value="1"/>
</dbReference>
<dbReference type="InterPro" id="IPR001056">
    <property type="entry name" value="PSII_PsbH"/>
</dbReference>
<dbReference type="InterPro" id="IPR036863">
    <property type="entry name" value="PSII_PsbH_sf"/>
</dbReference>
<dbReference type="NCBIfam" id="NF002728">
    <property type="entry name" value="PRK02624.1"/>
    <property type="match status" value="1"/>
</dbReference>
<dbReference type="PANTHER" id="PTHR34469">
    <property type="entry name" value="PHOTOSYSTEM II REACTION CENTER PROTEIN H"/>
    <property type="match status" value="1"/>
</dbReference>
<dbReference type="PANTHER" id="PTHR34469:SF4">
    <property type="entry name" value="PHOTOSYSTEM II REACTION CENTER PROTEIN H"/>
    <property type="match status" value="1"/>
</dbReference>
<dbReference type="Pfam" id="PF00737">
    <property type="entry name" value="PsbH"/>
    <property type="match status" value="1"/>
</dbReference>
<dbReference type="SUPFAM" id="SSF161025">
    <property type="entry name" value="Photosystem II 10 kDa phosphoprotein PsbH"/>
    <property type="match status" value="1"/>
</dbReference>
<accession>P51325</accession>
<geneLocation type="chloroplast"/>
<name>PSBH_PORPU</name>
<organism>
    <name type="scientific">Porphyra purpurea</name>
    <name type="common">Red seaweed</name>
    <name type="synonym">Ulva purpurea</name>
    <dbReference type="NCBI Taxonomy" id="2787"/>
    <lineage>
        <taxon>Eukaryota</taxon>
        <taxon>Rhodophyta</taxon>
        <taxon>Bangiophyceae</taxon>
        <taxon>Bangiales</taxon>
        <taxon>Bangiaceae</taxon>
        <taxon>Porphyra</taxon>
    </lineage>
</organism>
<feature type="chain" id="PRO_0000070531" description="Photosystem II reaction center protein H">
    <location>
        <begin position="1"/>
        <end position="67"/>
    </location>
</feature>
<feature type="transmembrane region" description="Helical" evidence="1">
    <location>
        <begin position="29"/>
        <end position="49"/>
    </location>
</feature>
<sequence>MALRTRLGEILRPLNSEYGKVAPGWGTTPIMGIFMLLFFLFLLIILQIYNSSLVLENVDVDWATLGS</sequence>
<gene>
    <name evidence="1" type="primary">psbH</name>
</gene>